<dbReference type="EC" id="2.1.1.170" evidence="1"/>
<dbReference type="EMBL" id="CP000083">
    <property type="protein sequence ID" value="AAZ24651.1"/>
    <property type="molecule type" value="Genomic_DNA"/>
</dbReference>
<dbReference type="RefSeq" id="WP_011045764.1">
    <property type="nucleotide sequence ID" value="NC_003910.7"/>
</dbReference>
<dbReference type="SMR" id="Q47U39"/>
<dbReference type="STRING" id="167879.CPS_5046"/>
<dbReference type="KEGG" id="cps:CPS_5046"/>
<dbReference type="eggNOG" id="COG0357">
    <property type="taxonomic scope" value="Bacteria"/>
</dbReference>
<dbReference type="HOGENOM" id="CLU_065341_2_2_6"/>
<dbReference type="Proteomes" id="UP000000547">
    <property type="component" value="Chromosome"/>
</dbReference>
<dbReference type="GO" id="GO:0005829">
    <property type="term" value="C:cytosol"/>
    <property type="evidence" value="ECO:0007669"/>
    <property type="project" value="TreeGrafter"/>
</dbReference>
<dbReference type="GO" id="GO:0070043">
    <property type="term" value="F:rRNA (guanine-N7-)-methyltransferase activity"/>
    <property type="evidence" value="ECO:0007669"/>
    <property type="project" value="UniProtKB-UniRule"/>
</dbReference>
<dbReference type="CDD" id="cd02440">
    <property type="entry name" value="AdoMet_MTases"/>
    <property type="match status" value="1"/>
</dbReference>
<dbReference type="Gene3D" id="3.40.50.150">
    <property type="entry name" value="Vaccinia Virus protein VP39"/>
    <property type="match status" value="1"/>
</dbReference>
<dbReference type="HAMAP" id="MF_00074">
    <property type="entry name" value="16SrRNA_methyltr_G"/>
    <property type="match status" value="1"/>
</dbReference>
<dbReference type="InterPro" id="IPR003682">
    <property type="entry name" value="rRNA_ssu_MeTfrase_G"/>
</dbReference>
<dbReference type="InterPro" id="IPR029063">
    <property type="entry name" value="SAM-dependent_MTases_sf"/>
</dbReference>
<dbReference type="NCBIfam" id="TIGR00138">
    <property type="entry name" value="rsmG_gidB"/>
    <property type="match status" value="1"/>
</dbReference>
<dbReference type="PANTHER" id="PTHR31760">
    <property type="entry name" value="S-ADENOSYL-L-METHIONINE-DEPENDENT METHYLTRANSFERASES SUPERFAMILY PROTEIN"/>
    <property type="match status" value="1"/>
</dbReference>
<dbReference type="PANTHER" id="PTHR31760:SF0">
    <property type="entry name" value="S-ADENOSYL-L-METHIONINE-DEPENDENT METHYLTRANSFERASES SUPERFAMILY PROTEIN"/>
    <property type="match status" value="1"/>
</dbReference>
<dbReference type="Pfam" id="PF02527">
    <property type="entry name" value="GidB"/>
    <property type="match status" value="1"/>
</dbReference>
<dbReference type="PIRSF" id="PIRSF003078">
    <property type="entry name" value="GidB"/>
    <property type="match status" value="1"/>
</dbReference>
<dbReference type="SUPFAM" id="SSF53335">
    <property type="entry name" value="S-adenosyl-L-methionine-dependent methyltransferases"/>
    <property type="match status" value="1"/>
</dbReference>
<comment type="function">
    <text evidence="1">Specifically methylates the N7 position of guanine in position 527 of 16S rRNA.</text>
</comment>
<comment type="catalytic activity">
    <reaction evidence="1">
        <text>guanosine(527) in 16S rRNA + S-adenosyl-L-methionine = N(7)-methylguanosine(527) in 16S rRNA + S-adenosyl-L-homocysteine</text>
        <dbReference type="Rhea" id="RHEA:42732"/>
        <dbReference type="Rhea" id="RHEA-COMP:10209"/>
        <dbReference type="Rhea" id="RHEA-COMP:10210"/>
        <dbReference type="ChEBI" id="CHEBI:57856"/>
        <dbReference type="ChEBI" id="CHEBI:59789"/>
        <dbReference type="ChEBI" id="CHEBI:74269"/>
        <dbReference type="ChEBI" id="CHEBI:74480"/>
        <dbReference type="EC" id="2.1.1.170"/>
    </reaction>
</comment>
<comment type="subcellular location">
    <subcellularLocation>
        <location evidence="1">Cytoplasm</location>
    </subcellularLocation>
</comment>
<comment type="similarity">
    <text evidence="1">Belongs to the methyltransferase superfamily. RNA methyltransferase RsmG family.</text>
</comment>
<keyword id="KW-0963">Cytoplasm</keyword>
<keyword id="KW-0489">Methyltransferase</keyword>
<keyword id="KW-0698">rRNA processing</keyword>
<keyword id="KW-0949">S-adenosyl-L-methionine</keyword>
<keyword id="KW-0808">Transferase</keyword>
<organism>
    <name type="scientific">Colwellia psychrerythraea (strain 34H / ATCC BAA-681)</name>
    <name type="common">Vibrio psychroerythus</name>
    <dbReference type="NCBI Taxonomy" id="167879"/>
    <lineage>
        <taxon>Bacteria</taxon>
        <taxon>Pseudomonadati</taxon>
        <taxon>Pseudomonadota</taxon>
        <taxon>Gammaproteobacteria</taxon>
        <taxon>Alteromonadales</taxon>
        <taxon>Colwelliaceae</taxon>
        <taxon>Colwellia</taxon>
    </lineage>
</organism>
<feature type="chain" id="PRO_0000184239" description="Ribosomal RNA small subunit methyltransferase G">
    <location>
        <begin position="1"/>
        <end position="209"/>
    </location>
</feature>
<feature type="binding site" evidence="1">
    <location>
        <position position="75"/>
    </location>
    <ligand>
        <name>S-adenosyl-L-methionine</name>
        <dbReference type="ChEBI" id="CHEBI:59789"/>
    </ligand>
</feature>
<feature type="binding site" evidence="1">
    <location>
        <position position="80"/>
    </location>
    <ligand>
        <name>S-adenosyl-L-methionine</name>
        <dbReference type="ChEBI" id="CHEBI:59789"/>
    </ligand>
</feature>
<feature type="binding site" evidence="1">
    <location>
        <begin position="126"/>
        <end position="127"/>
    </location>
    <ligand>
        <name>S-adenosyl-L-methionine</name>
        <dbReference type="ChEBI" id="CHEBI:59789"/>
    </ligand>
</feature>
<feature type="binding site" evidence="1">
    <location>
        <position position="141"/>
    </location>
    <ligand>
        <name>S-adenosyl-L-methionine</name>
        <dbReference type="ChEBI" id="CHEBI:59789"/>
    </ligand>
</feature>
<name>RSMG_COLP3</name>
<evidence type="ECO:0000255" key="1">
    <source>
        <dbReference type="HAMAP-Rule" id="MF_00074"/>
    </source>
</evidence>
<reference key="1">
    <citation type="journal article" date="2005" name="Proc. Natl. Acad. Sci. U.S.A.">
        <title>The psychrophilic lifestyle as revealed by the genome sequence of Colwellia psychrerythraea 34H through genomic and proteomic analyses.</title>
        <authorList>
            <person name="Methe B.A."/>
            <person name="Nelson K.E."/>
            <person name="Deming J.W."/>
            <person name="Momen B."/>
            <person name="Melamud E."/>
            <person name="Zhang X."/>
            <person name="Moult J."/>
            <person name="Madupu R."/>
            <person name="Nelson W.C."/>
            <person name="Dodson R.J."/>
            <person name="Brinkac L.M."/>
            <person name="Daugherty S.C."/>
            <person name="Durkin A.S."/>
            <person name="DeBoy R.T."/>
            <person name="Kolonay J.F."/>
            <person name="Sullivan S.A."/>
            <person name="Zhou L."/>
            <person name="Davidsen T.M."/>
            <person name="Wu M."/>
            <person name="Huston A.L."/>
            <person name="Lewis M."/>
            <person name="Weaver B."/>
            <person name="Weidman J.F."/>
            <person name="Khouri H."/>
            <person name="Utterback T.R."/>
            <person name="Feldblyum T.V."/>
            <person name="Fraser C.M."/>
        </authorList>
    </citation>
    <scope>NUCLEOTIDE SEQUENCE [LARGE SCALE GENOMIC DNA]</scope>
    <source>
        <strain>34H / ATCC BAA-681</strain>
    </source>
</reference>
<proteinExistence type="inferred from homology"/>
<gene>
    <name evidence="1" type="primary">rsmG</name>
    <name type="ordered locus">CPS_5046</name>
</gene>
<sequence>MTLSQQLSTLISKTQLVVSQEQIDLLIQYVELLNKWNKAYNLTSVRDPSEMLVKHIMDSLMVGEVLIGKNFIDVGTGPGLPGIPLAILYPERNFVLLDSLGKRITFLRQVVFQLKLSNVTPVKARVEEYQGEEPFDGVLSRAFSSLNDMVSWCKHLITTEQGRFFALKGQYPQDEISQLPENITLVDSHEIIVPDLVGERHVIVLKKLH</sequence>
<accession>Q47U39</accession>
<protein>
    <recommendedName>
        <fullName evidence="1">Ribosomal RNA small subunit methyltransferase G</fullName>
        <ecNumber evidence="1">2.1.1.170</ecNumber>
    </recommendedName>
    <alternativeName>
        <fullName evidence="1">16S rRNA 7-methylguanosine methyltransferase</fullName>
        <shortName evidence="1">16S rRNA m7G methyltransferase</shortName>
    </alternativeName>
</protein>